<dbReference type="EC" id="4.1.99.5" evidence="1"/>
<dbReference type="EMBL" id="BA000022">
    <property type="protein sequence ID" value="BAA10217.1"/>
    <property type="molecule type" value="Genomic_DNA"/>
</dbReference>
<dbReference type="PIR" id="S76365">
    <property type="entry name" value="S76365"/>
</dbReference>
<dbReference type="PDB" id="4Z5S">
    <property type="method" value="X-ray"/>
    <property type="resolution" value="1.58 A"/>
    <property type="chains" value="A=1-231"/>
</dbReference>
<dbReference type="PDBsum" id="4Z5S"/>
<dbReference type="SMR" id="Q55688"/>
<dbReference type="IntAct" id="Q55688">
    <property type="interactions" value="7"/>
</dbReference>
<dbReference type="STRING" id="1148.gene:10499716"/>
<dbReference type="PaxDb" id="1148-1001589"/>
<dbReference type="EnsemblBacteria" id="BAA10217">
    <property type="protein sequence ID" value="BAA10217"/>
    <property type="gene ID" value="BAA10217"/>
</dbReference>
<dbReference type="KEGG" id="syn:sll0208"/>
<dbReference type="eggNOG" id="COG1633">
    <property type="taxonomic scope" value="Bacteria"/>
</dbReference>
<dbReference type="InParanoid" id="Q55688"/>
<dbReference type="BRENDA" id="4.1.99.5">
    <property type="organism ID" value="6192"/>
</dbReference>
<dbReference type="Proteomes" id="UP000001425">
    <property type="component" value="Chromosome"/>
</dbReference>
<dbReference type="GO" id="GO:0071771">
    <property type="term" value="F:aldehyde oxygenase (deformylating) activity"/>
    <property type="evidence" value="ECO:0007669"/>
    <property type="project" value="UniProtKB-UniRule"/>
</dbReference>
<dbReference type="GO" id="GO:0046914">
    <property type="term" value="F:transition metal ion binding"/>
    <property type="evidence" value="ECO:0007669"/>
    <property type="project" value="UniProtKB-UniRule"/>
</dbReference>
<dbReference type="CDD" id="cd00657">
    <property type="entry name" value="Ferritin_like"/>
    <property type="match status" value="1"/>
</dbReference>
<dbReference type="Gene3D" id="1.20.1260.10">
    <property type="match status" value="1"/>
</dbReference>
<dbReference type="HAMAP" id="MF_00931">
    <property type="entry name" value="Aldeh_decarbonylase"/>
    <property type="match status" value="1"/>
</dbReference>
<dbReference type="InterPro" id="IPR022612">
    <property type="entry name" value="Ald_deCOase"/>
</dbReference>
<dbReference type="InterPro" id="IPR012347">
    <property type="entry name" value="Ferritin-like"/>
</dbReference>
<dbReference type="InterPro" id="IPR009078">
    <property type="entry name" value="Ferritin-like_SF"/>
</dbReference>
<dbReference type="NCBIfam" id="TIGR04059">
    <property type="entry name" value="Ald_deCOase"/>
    <property type="match status" value="1"/>
</dbReference>
<dbReference type="Pfam" id="PF11266">
    <property type="entry name" value="Ald_deCOase"/>
    <property type="match status" value="1"/>
</dbReference>
<dbReference type="SUPFAM" id="SSF47240">
    <property type="entry name" value="Ferritin-like"/>
    <property type="match status" value="1"/>
</dbReference>
<name>ALDEC_SYNY3</name>
<feature type="chain" id="PRO_0000418905" description="Aldehyde decarbonylase">
    <location>
        <begin position="1"/>
        <end position="231"/>
    </location>
</feature>
<feature type="binding site" evidence="1">
    <location>
        <position position="32"/>
    </location>
    <ligand>
        <name>Fe cation</name>
        <dbReference type="ChEBI" id="CHEBI:24875"/>
        <label>1</label>
    </ligand>
</feature>
<feature type="binding site" evidence="1">
    <location>
        <position position="60"/>
    </location>
    <ligand>
        <name>Fe cation</name>
        <dbReference type="ChEBI" id="CHEBI:24875"/>
        <label>1</label>
    </ligand>
</feature>
<feature type="binding site" evidence="1">
    <location>
        <position position="60"/>
    </location>
    <ligand>
        <name>Fe cation</name>
        <dbReference type="ChEBI" id="CHEBI:24875"/>
        <label>2</label>
    </ligand>
</feature>
<feature type="binding site" evidence="1">
    <location>
        <position position="63"/>
    </location>
    <ligand>
        <name>Fe cation</name>
        <dbReference type="ChEBI" id="CHEBI:24875"/>
        <label>1</label>
    </ligand>
</feature>
<feature type="binding site" evidence="1">
    <location>
        <position position="115"/>
    </location>
    <ligand>
        <name>Fe cation</name>
        <dbReference type="ChEBI" id="CHEBI:24875"/>
        <label>2</label>
    </ligand>
</feature>
<feature type="binding site" evidence="1">
    <location>
        <position position="147"/>
    </location>
    <ligand>
        <name>Fe cation</name>
        <dbReference type="ChEBI" id="CHEBI:24875"/>
        <label>2</label>
    </ligand>
</feature>
<feature type="helix" evidence="3">
    <location>
        <begin position="15"/>
        <end position="45"/>
    </location>
</feature>
<feature type="helix" evidence="3">
    <location>
        <begin position="47"/>
        <end position="49"/>
    </location>
</feature>
<feature type="helix" evidence="3">
    <location>
        <begin position="50"/>
        <end position="73"/>
    </location>
</feature>
<feature type="helix" evidence="3">
    <location>
        <begin position="80"/>
        <end position="99"/>
    </location>
</feature>
<feature type="helix" evidence="3">
    <location>
        <begin position="103"/>
        <end position="111"/>
    </location>
</feature>
<feature type="helix" evidence="3">
    <location>
        <begin position="113"/>
        <end position="125"/>
    </location>
</feature>
<feature type="helix" evidence="3">
    <location>
        <begin position="126"/>
        <end position="128"/>
    </location>
</feature>
<feature type="helix" evidence="3">
    <location>
        <begin position="131"/>
        <end position="146"/>
    </location>
</feature>
<feature type="helix" evidence="3">
    <location>
        <begin position="150"/>
        <end position="157"/>
    </location>
</feature>
<feature type="helix" evidence="3">
    <location>
        <begin position="159"/>
        <end position="190"/>
    </location>
</feature>
<feature type="helix" evidence="3">
    <location>
        <begin position="195"/>
        <end position="213"/>
    </location>
</feature>
<feature type="helix" evidence="3">
    <location>
        <begin position="217"/>
        <end position="224"/>
    </location>
</feature>
<feature type="turn" evidence="3">
    <location>
        <begin position="225"/>
        <end position="227"/>
    </location>
</feature>
<keyword id="KW-0002">3D-structure</keyword>
<keyword id="KW-0408">Iron</keyword>
<keyword id="KW-0456">Lyase</keyword>
<keyword id="KW-0479">Metal-binding</keyword>
<keyword id="KW-0521">NADP</keyword>
<keyword id="KW-1185">Reference proteome</keyword>
<evidence type="ECO:0000255" key="1">
    <source>
        <dbReference type="HAMAP-Rule" id="MF_00931"/>
    </source>
</evidence>
<evidence type="ECO:0000269" key="2">
    <source>
    </source>
</evidence>
<evidence type="ECO:0007829" key="3">
    <source>
        <dbReference type="PDB" id="4Z5S"/>
    </source>
</evidence>
<accession>Q55688</accession>
<reference key="1">
    <citation type="journal article" date="1996" name="DNA Res.">
        <title>Sequence analysis of the genome of the unicellular cyanobacterium Synechocystis sp. strain PCC6803. II. Sequence determination of the entire genome and assignment of potential protein-coding regions.</title>
        <authorList>
            <person name="Kaneko T."/>
            <person name="Sato S."/>
            <person name="Kotani H."/>
            <person name="Tanaka A."/>
            <person name="Asamizu E."/>
            <person name="Nakamura Y."/>
            <person name="Miyajima N."/>
            <person name="Hirosawa M."/>
            <person name="Sugiura M."/>
            <person name="Sasamoto S."/>
            <person name="Kimura T."/>
            <person name="Hosouchi T."/>
            <person name="Matsuno A."/>
            <person name="Muraki A."/>
            <person name="Nakazaki N."/>
            <person name="Naruo K."/>
            <person name="Okumura S."/>
            <person name="Shimpo S."/>
            <person name="Takeuchi C."/>
            <person name="Wada T."/>
            <person name="Watanabe A."/>
            <person name="Yamada M."/>
            <person name="Yasuda M."/>
            <person name="Tabata S."/>
        </authorList>
    </citation>
    <scope>NUCLEOTIDE SEQUENCE [LARGE SCALE GENOMIC DNA]</scope>
    <source>
        <strain>ATCC 27184 / PCC 6803 / Kazusa</strain>
    </source>
</reference>
<reference key="2">
    <citation type="journal article" date="2010" name="Science">
        <title>Microbial biosynthesis of alkanes.</title>
        <authorList>
            <person name="Schirmer A."/>
            <person name="Rude M.A."/>
            <person name="Li X."/>
            <person name="Popova E."/>
            <person name="del Cardayre S.B."/>
        </authorList>
    </citation>
    <scope>FUNCTION</scope>
    <scope>DISRUPTION PHENOTYPE</scope>
</reference>
<comment type="function">
    <text evidence="1 2">Catalyzes the decarbonylation of fatty aldehydes to alkanes. Requires the presence of ferredoxin, ferredoxin reductase and NADPH for in vitro decarbonylase activity (By similarity). Involved in the biosynthesis of alkanes, mainly heptadecane and pentadecane.</text>
</comment>
<comment type="catalytic activity">
    <reaction evidence="1">
        <text>a long-chain fatty aldehyde + 2 NADPH + O2 + H(+) = a long-chain alkane + formate + 2 NADP(+) + H2O</text>
        <dbReference type="Rhea" id="RHEA:21440"/>
        <dbReference type="ChEBI" id="CHEBI:15377"/>
        <dbReference type="ChEBI" id="CHEBI:15378"/>
        <dbReference type="ChEBI" id="CHEBI:15379"/>
        <dbReference type="ChEBI" id="CHEBI:15740"/>
        <dbReference type="ChEBI" id="CHEBI:17176"/>
        <dbReference type="ChEBI" id="CHEBI:57783"/>
        <dbReference type="ChEBI" id="CHEBI:58349"/>
        <dbReference type="ChEBI" id="CHEBI:83563"/>
        <dbReference type="EC" id="4.1.99.5"/>
    </reaction>
</comment>
<comment type="cofactor">
    <text evidence="1">Binds 2 metal cations per subunit. The catalytic dinuclear metal-binding site could be either a di-iron or a manganese-iron cofactor.</text>
</comment>
<comment type="disruption phenotype">
    <text evidence="2">Abolishes the presence of alkanes.</text>
</comment>
<comment type="similarity">
    <text evidence="1">Belongs to the aldehyde decarbonylase family.</text>
</comment>
<protein>
    <recommendedName>
        <fullName evidence="1">Aldehyde decarbonylase</fullName>
        <shortName evidence="1">AD</shortName>
        <ecNumber evidence="1">4.1.99.5</ecNumber>
    </recommendedName>
    <alternativeName>
        <fullName evidence="1">Fatty aldehyde decarbonylase</fullName>
    </alternativeName>
</protein>
<gene>
    <name type="ordered locus">sll0208</name>
</gene>
<proteinExistence type="evidence at protein level"/>
<organism>
    <name type="scientific">Synechocystis sp. (strain ATCC 27184 / PCC 6803 / Kazusa)</name>
    <dbReference type="NCBI Taxonomy" id="1111708"/>
    <lineage>
        <taxon>Bacteria</taxon>
        <taxon>Bacillati</taxon>
        <taxon>Cyanobacteriota</taxon>
        <taxon>Cyanophyceae</taxon>
        <taxon>Synechococcales</taxon>
        <taxon>Merismopediaceae</taxon>
        <taxon>Synechocystis</taxon>
    </lineage>
</organism>
<sequence>MPELAVRTEFDYSSEIYKDAYSRINAIVIEGEQEAYSNYLQMAELLPEDKEELTRLAKMENRHKKGFQACGNNLQVNPDMPYAQEFFAGLHGNFQHAFSEGKVVTCLLIQALIIEAFAIAAYNIYIPVADDFARKITEGVVKDEYTHLNYGEEWLKANFATAKEELEQANKENLPLVWKMLNQVQGDAKVLGMEKEALVEDFMISYGEALSNIGFSTREIMRMSSYGLAGV</sequence>